<comment type="function">
    <text evidence="1">Catalyzes the synthesis of GMP from XMP.</text>
</comment>
<comment type="catalytic activity">
    <reaction evidence="1">
        <text>XMP + L-glutamine + ATP + H2O = GMP + L-glutamate + AMP + diphosphate + 2 H(+)</text>
        <dbReference type="Rhea" id="RHEA:11680"/>
        <dbReference type="ChEBI" id="CHEBI:15377"/>
        <dbReference type="ChEBI" id="CHEBI:15378"/>
        <dbReference type="ChEBI" id="CHEBI:29985"/>
        <dbReference type="ChEBI" id="CHEBI:30616"/>
        <dbReference type="ChEBI" id="CHEBI:33019"/>
        <dbReference type="ChEBI" id="CHEBI:57464"/>
        <dbReference type="ChEBI" id="CHEBI:58115"/>
        <dbReference type="ChEBI" id="CHEBI:58359"/>
        <dbReference type="ChEBI" id="CHEBI:456215"/>
        <dbReference type="EC" id="6.3.5.2"/>
    </reaction>
</comment>
<comment type="pathway">
    <text evidence="1">Purine metabolism; GMP biosynthesis; GMP from XMP (L-Gln route): step 1/1.</text>
</comment>
<comment type="subunit">
    <text evidence="1">Homodimer.</text>
</comment>
<protein>
    <recommendedName>
        <fullName evidence="1">GMP synthase [glutamine-hydrolyzing]</fullName>
        <ecNumber evidence="1">6.3.5.2</ecNumber>
    </recommendedName>
    <alternativeName>
        <fullName evidence="1">GMP synthetase</fullName>
    </alternativeName>
    <alternativeName>
        <fullName evidence="1">Glutamine amidotransferase</fullName>
    </alternativeName>
</protein>
<accession>Q8UIL2</accession>
<proteinExistence type="inferred from homology"/>
<name>GUAA_AGRFC</name>
<keyword id="KW-0067">ATP-binding</keyword>
<keyword id="KW-0315">Glutamine amidotransferase</keyword>
<keyword id="KW-0332">GMP biosynthesis</keyword>
<keyword id="KW-0436">Ligase</keyword>
<keyword id="KW-0547">Nucleotide-binding</keyword>
<keyword id="KW-0658">Purine biosynthesis</keyword>
<keyword id="KW-1185">Reference proteome</keyword>
<reference key="1">
    <citation type="journal article" date="2001" name="Science">
        <title>The genome of the natural genetic engineer Agrobacterium tumefaciens C58.</title>
        <authorList>
            <person name="Wood D.W."/>
            <person name="Setubal J.C."/>
            <person name="Kaul R."/>
            <person name="Monks D.E."/>
            <person name="Kitajima J.P."/>
            <person name="Okura V.K."/>
            <person name="Zhou Y."/>
            <person name="Chen L."/>
            <person name="Wood G.E."/>
            <person name="Almeida N.F. Jr."/>
            <person name="Woo L."/>
            <person name="Chen Y."/>
            <person name="Paulsen I.T."/>
            <person name="Eisen J.A."/>
            <person name="Karp P.D."/>
            <person name="Bovee D. Sr."/>
            <person name="Chapman P."/>
            <person name="Clendenning J."/>
            <person name="Deatherage G."/>
            <person name="Gillet W."/>
            <person name="Grant C."/>
            <person name="Kutyavin T."/>
            <person name="Levy R."/>
            <person name="Li M.-J."/>
            <person name="McClelland E."/>
            <person name="Palmieri A."/>
            <person name="Raymond C."/>
            <person name="Rouse G."/>
            <person name="Saenphimmachak C."/>
            <person name="Wu Z."/>
            <person name="Romero P."/>
            <person name="Gordon D."/>
            <person name="Zhang S."/>
            <person name="Yoo H."/>
            <person name="Tao Y."/>
            <person name="Biddle P."/>
            <person name="Jung M."/>
            <person name="Krespan W."/>
            <person name="Perry M."/>
            <person name="Gordon-Kamm B."/>
            <person name="Liao L."/>
            <person name="Kim S."/>
            <person name="Hendrick C."/>
            <person name="Zhao Z.-Y."/>
            <person name="Dolan M."/>
            <person name="Chumley F."/>
            <person name="Tingey S.V."/>
            <person name="Tomb J.-F."/>
            <person name="Gordon M.P."/>
            <person name="Olson M.V."/>
            <person name="Nester E.W."/>
        </authorList>
    </citation>
    <scope>NUCLEOTIDE SEQUENCE [LARGE SCALE GENOMIC DNA]</scope>
    <source>
        <strain>C58 / ATCC 33970</strain>
    </source>
</reference>
<reference key="2">
    <citation type="journal article" date="2001" name="Science">
        <title>Genome sequence of the plant pathogen and biotechnology agent Agrobacterium tumefaciens C58.</title>
        <authorList>
            <person name="Goodner B."/>
            <person name="Hinkle G."/>
            <person name="Gattung S."/>
            <person name="Miller N."/>
            <person name="Blanchard M."/>
            <person name="Qurollo B."/>
            <person name="Goldman B.S."/>
            <person name="Cao Y."/>
            <person name="Askenazi M."/>
            <person name="Halling C."/>
            <person name="Mullin L."/>
            <person name="Houmiel K."/>
            <person name="Gordon J."/>
            <person name="Vaudin M."/>
            <person name="Iartchouk O."/>
            <person name="Epp A."/>
            <person name="Liu F."/>
            <person name="Wollam C."/>
            <person name="Allinger M."/>
            <person name="Doughty D."/>
            <person name="Scott C."/>
            <person name="Lappas C."/>
            <person name="Markelz B."/>
            <person name="Flanagan C."/>
            <person name="Crowell C."/>
            <person name="Gurson J."/>
            <person name="Lomo C."/>
            <person name="Sear C."/>
            <person name="Strub G."/>
            <person name="Cielo C."/>
            <person name="Slater S."/>
        </authorList>
    </citation>
    <scope>NUCLEOTIDE SEQUENCE [LARGE SCALE GENOMIC DNA]</scope>
    <source>
        <strain>C58 / ATCC 33970</strain>
    </source>
</reference>
<dbReference type="EC" id="6.3.5.2" evidence="1"/>
<dbReference type="EMBL" id="AE007869">
    <property type="protein sequence ID" value="AAK86096.1"/>
    <property type="molecule type" value="Genomic_DNA"/>
</dbReference>
<dbReference type="PIR" id="AI2610">
    <property type="entry name" value="AI2610"/>
</dbReference>
<dbReference type="PIR" id="G97392">
    <property type="entry name" value="G97392"/>
</dbReference>
<dbReference type="RefSeq" id="NP_353311.1">
    <property type="nucleotide sequence ID" value="NC_003062.2"/>
</dbReference>
<dbReference type="RefSeq" id="WP_006310127.1">
    <property type="nucleotide sequence ID" value="NC_003062.2"/>
</dbReference>
<dbReference type="SMR" id="Q8UIL2"/>
<dbReference type="STRING" id="176299.Atu0281"/>
<dbReference type="MEROPS" id="C26.957"/>
<dbReference type="EnsemblBacteria" id="AAK86096">
    <property type="protein sequence ID" value="AAK86096"/>
    <property type="gene ID" value="Atu0281"/>
</dbReference>
<dbReference type="GeneID" id="1132319"/>
<dbReference type="KEGG" id="atu:Atu0281"/>
<dbReference type="PATRIC" id="fig|176299.10.peg.272"/>
<dbReference type="eggNOG" id="COG0518">
    <property type="taxonomic scope" value="Bacteria"/>
</dbReference>
<dbReference type="eggNOG" id="COG0519">
    <property type="taxonomic scope" value="Bacteria"/>
</dbReference>
<dbReference type="HOGENOM" id="CLU_014340_0_5_5"/>
<dbReference type="OrthoDB" id="9802219at2"/>
<dbReference type="PhylomeDB" id="Q8UIL2"/>
<dbReference type="BioCyc" id="AGRO:ATU0281-MONOMER"/>
<dbReference type="UniPathway" id="UPA00189">
    <property type="reaction ID" value="UER00296"/>
</dbReference>
<dbReference type="Proteomes" id="UP000000813">
    <property type="component" value="Chromosome circular"/>
</dbReference>
<dbReference type="GO" id="GO:0005829">
    <property type="term" value="C:cytosol"/>
    <property type="evidence" value="ECO:0007669"/>
    <property type="project" value="TreeGrafter"/>
</dbReference>
<dbReference type="GO" id="GO:0005524">
    <property type="term" value="F:ATP binding"/>
    <property type="evidence" value="ECO:0007669"/>
    <property type="project" value="UniProtKB-UniRule"/>
</dbReference>
<dbReference type="GO" id="GO:0003921">
    <property type="term" value="F:GMP synthase activity"/>
    <property type="evidence" value="ECO:0007669"/>
    <property type="project" value="InterPro"/>
</dbReference>
<dbReference type="CDD" id="cd01742">
    <property type="entry name" value="GATase1_GMP_Synthase"/>
    <property type="match status" value="1"/>
</dbReference>
<dbReference type="CDD" id="cd01997">
    <property type="entry name" value="GMP_synthase_C"/>
    <property type="match status" value="1"/>
</dbReference>
<dbReference type="FunFam" id="3.30.300.10:FF:000002">
    <property type="entry name" value="GMP synthase [glutamine-hydrolyzing]"/>
    <property type="match status" value="1"/>
</dbReference>
<dbReference type="FunFam" id="3.40.50.620:FF:000001">
    <property type="entry name" value="GMP synthase [glutamine-hydrolyzing]"/>
    <property type="match status" value="1"/>
</dbReference>
<dbReference type="FunFam" id="3.40.50.880:FF:000001">
    <property type="entry name" value="GMP synthase [glutamine-hydrolyzing]"/>
    <property type="match status" value="1"/>
</dbReference>
<dbReference type="Gene3D" id="3.30.300.10">
    <property type="match status" value="1"/>
</dbReference>
<dbReference type="Gene3D" id="3.40.50.880">
    <property type="match status" value="1"/>
</dbReference>
<dbReference type="Gene3D" id="3.40.50.620">
    <property type="entry name" value="HUPs"/>
    <property type="match status" value="1"/>
</dbReference>
<dbReference type="HAMAP" id="MF_00344">
    <property type="entry name" value="GMP_synthase"/>
    <property type="match status" value="1"/>
</dbReference>
<dbReference type="InterPro" id="IPR029062">
    <property type="entry name" value="Class_I_gatase-like"/>
</dbReference>
<dbReference type="InterPro" id="IPR017926">
    <property type="entry name" value="GATASE"/>
</dbReference>
<dbReference type="InterPro" id="IPR001674">
    <property type="entry name" value="GMP_synth_C"/>
</dbReference>
<dbReference type="InterPro" id="IPR004739">
    <property type="entry name" value="GMP_synth_GATase"/>
</dbReference>
<dbReference type="InterPro" id="IPR022955">
    <property type="entry name" value="GMP_synthase"/>
</dbReference>
<dbReference type="InterPro" id="IPR025777">
    <property type="entry name" value="GMPS_ATP_PPase_dom"/>
</dbReference>
<dbReference type="InterPro" id="IPR014729">
    <property type="entry name" value="Rossmann-like_a/b/a_fold"/>
</dbReference>
<dbReference type="NCBIfam" id="TIGR00884">
    <property type="entry name" value="guaA_Cterm"/>
    <property type="match status" value="1"/>
</dbReference>
<dbReference type="NCBIfam" id="TIGR00888">
    <property type="entry name" value="guaA_Nterm"/>
    <property type="match status" value="1"/>
</dbReference>
<dbReference type="NCBIfam" id="NF000848">
    <property type="entry name" value="PRK00074.1"/>
    <property type="match status" value="1"/>
</dbReference>
<dbReference type="PANTHER" id="PTHR11922:SF2">
    <property type="entry name" value="GMP SYNTHASE [GLUTAMINE-HYDROLYZING]"/>
    <property type="match status" value="1"/>
</dbReference>
<dbReference type="PANTHER" id="PTHR11922">
    <property type="entry name" value="GMP SYNTHASE-RELATED"/>
    <property type="match status" value="1"/>
</dbReference>
<dbReference type="Pfam" id="PF00117">
    <property type="entry name" value="GATase"/>
    <property type="match status" value="1"/>
</dbReference>
<dbReference type="Pfam" id="PF00958">
    <property type="entry name" value="GMP_synt_C"/>
    <property type="match status" value="1"/>
</dbReference>
<dbReference type="Pfam" id="PF03054">
    <property type="entry name" value="tRNA_Me_trans"/>
    <property type="match status" value="1"/>
</dbReference>
<dbReference type="PRINTS" id="PR00099">
    <property type="entry name" value="CPSGATASE"/>
</dbReference>
<dbReference type="PRINTS" id="PR00096">
    <property type="entry name" value="GATASE"/>
</dbReference>
<dbReference type="SUPFAM" id="SSF52402">
    <property type="entry name" value="Adenine nucleotide alpha hydrolases-like"/>
    <property type="match status" value="1"/>
</dbReference>
<dbReference type="SUPFAM" id="SSF52317">
    <property type="entry name" value="Class I glutamine amidotransferase-like"/>
    <property type="match status" value="1"/>
</dbReference>
<dbReference type="SUPFAM" id="SSF54810">
    <property type="entry name" value="GMP synthetase C-terminal dimerisation domain"/>
    <property type="match status" value="1"/>
</dbReference>
<dbReference type="PROSITE" id="PS51273">
    <property type="entry name" value="GATASE_TYPE_1"/>
    <property type="match status" value="1"/>
</dbReference>
<dbReference type="PROSITE" id="PS51553">
    <property type="entry name" value="GMPS_ATP_PPASE"/>
    <property type="match status" value="1"/>
</dbReference>
<gene>
    <name evidence="1" type="primary">guaA</name>
    <name type="ordered locus">Atu0281</name>
    <name type="ORF">AGR_C_480</name>
</gene>
<feature type="chain" id="PRO_0000140086" description="GMP synthase [glutamine-hydrolyzing]">
    <location>
        <begin position="1"/>
        <end position="525"/>
    </location>
</feature>
<feature type="domain" description="Glutamine amidotransferase type-1" evidence="1">
    <location>
        <begin position="9"/>
        <end position="202"/>
    </location>
</feature>
<feature type="domain" description="GMPS ATP-PPase" evidence="1">
    <location>
        <begin position="203"/>
        <end position="400"/>
    </location>
</feature>
<feature type="active site" description="Nucleophile" evidence="1">
    <location>
        <position position="86"/>
    </location>
</feature>
<feature type="active site" evidence="1">
    <location>
        <position position="176"/>
    </location>
</feature>
<feature type="active site" evidence="1">
    <location>
        <position position="178"/>
    </location>
</feature>
<feature type="binding site" evidence="1">
    <location>
        <begin position="230"/>
        <end position="236"/>
    </location>
    <ligand>
        <name>ATP</name>
        <dbReference type="ChEBI" id="CHEBI:30616"/>
    </ligand>
</feature>
<sequence length="525" mass="57521">MTQIAHPDSILIIDFGSQVTQLIARRIREAGVYCEIHPFQNAAEAFEKLQPKGVIFSGGPASVTAEGSPRAPQAVFDSKVPILGICYGQQTLCTQLGGVVEGGHAAEFGRADIDIKKASPLFEGFWEQGKSYPVWMSHGDRVTKLPEGFEVIATSENAPFAIAADEKRHYYTTMFHPEVVHTPDGGKLLSNFVHKIVGLKSDWTMAAYRAEMIRKIREQVGTGRVLCALSGGVDSSVAAILIHEAIGDQLTCVYVDHGLMRLGESEQVVGMFRDHYNIPLVHVDAADLFLGELSGVSDPEVKRKTIGRLFIEVFEAEAAKIAADGKGAPKFLAQGTLYPDVIESVSFSGGPSVTIKSHHNVGGLPERMNMQLVEPLRELFKDEVRALGRELGLPESFIGRHPFPGPGLAIRCPGAITREKLDILRKADAIYLDEIRKAGLYDTIWQAFAVLLPVQTVGVMGDYRTYDFVCALRAVTSVDGMTADFYPYDMNFLGRAATRIINEVRGINRVVYDVTSKPPGTIEWE</sequence>
<evidence type="ECO:0000255" key="1">
    <source>
        <dbReference type="HAMAP-Rule" id="MF_00344"/>
    </source>
</evidence>
<organism>
    <name type="scientific">Agrobacterium fabrum (strain C58 / ATCC 33970)</name>
    <name type="common">Agrobacterium tumefaciens (strain C58)</name>
    <dbReference type="NCBI Taxonomy" id="176299"/>
    <lineage>
        <taxon>Bacteria</taxon>
        <taxon>Pseudomonadati</taxon>
        <taxon>Pseudomonadota</taxon>
        <taxon>Alphaproteobacteria</taxon>
        <taxon>Hyphomicrobiales</taxon>
        <taxon>Rhizobiaceae</taxon>
        <taxon>Rhizobium/Agrobacterium group</taxon>
        <taxon>Agrobacterium</taxon>
        <taxon>Agrobacterium tumefaciens complex</taxon>
    </lineage>
</organism>